<keyword id="KW-0997">Cell inner membrane</keyword>
<keyword id="KW-1003">Cell membrane</keyword>
<keyword id="KW-0472">Membrane</keyword>
<keyword id="KW-0653">Protein transport</keyword>
<keyword id="KW-1185">Reference proteome</keyword>
<keyword id="KW-0811">Translocation</keyword>
<keyword id="KW-0812">Transmembrane</keyword>
<keyword id="KW-1133">Transmembrane helix</keyword>
<keyword id="KW-0813">Transport</keyword>
<sequence length="147" mass="15515">MFDFGFSELIVIAVVTLIVVGPERLPKVARTAGHLLGRLQRYVSDVKSDIKREMQLEELKALQQQVEQQARELESSMRGEAAKIEADVNKTVAEVKSGVTVDAAPVPLTHAVEAPAAPAPMSLAPHGDAASAGREPAAVPGSGPEKA</sequence>
<protein>
    <recommendedName>
        <fullName evidence="1">Sec-independent protein translocase protein TatB</fullName>
    </recommendedName>
</protein>
<feature type="chain" id="PRO_0000301142" description="Sec-independent protein translocase protein TatB">
    <location>
        <begin position="1"/>
        <end position="147"/>
    </location>
</feature>
<feature type="transmembrane region" description="Helical" evidence="1">
    <location>
        <begin position="1"/>
        <end position="21"/>
    </location>
</feature>
<feature type="region of interest" description="Disordered" evidence="2">
    <location>
        <begin position="117"/>
        <end position="147"/>
    </location>
</feature>
<gene>
    <name evidence="1" type="primary">tatB</name>
    <name type="ordered locus">AZOSEA06880</name>
    <name type="ORF">ebD2</name>
</gene>
<organism>
    <name type="scientific">Aromatoleum aromaticum (strain DSM 19018 / LMG 30748 / EbN1)</name>
    <name type="common">Azoarcus sp. (strain EbN1)</name>
    <dbReference type="NCBI Taxonomy" id="76114"/>
    <lineage>
        <taxon>Bacteria</taxon>
        <taxon>Pseudomonadati</taxon>
        <taxon>Pseudomonadota</taxon>
        <taxon>Betaproteobacteria</taxon>
        <taxon>Rhodocyclales</taxon>
        <taxon>Rhodocyclaceae</taxon>
        <taxon>Aromatoleum</taxon>
    </lineage>
</organism>
<comment type="function">
    <text evidence="1">Part of the twin-arginine translocation (Tat) system that transports large folded proteins containing a characteristic twin-arginine motif in their signal peptide across membranes. Together with TatC, TatB is part of a receptor directly interacting with Tat signal peptides. TatB may form an oligomeric binding site that transiently accommodates folded Tat precursor proteins before their translocation.</text>
</comment>
<comment type="subunit">
    <text evidence="1">The Tat system comprises two distinct complexes: a TatABC complex, containing multiple copies of TatA, TatB and TatC subunits, and a separate TatA complex, containing only TatA subunits. Substrates initially bind to the TatABC complex, which probably triggers association of the separate TatA complex to form the active translocon.</text>
</comment>
<comment type="subcellular location">
    <subcellularLocation>
        <location evidence="1">Cell inner membrane</location>
        <topology evidence="1">Single-pass membrane protein</topology>
    </subcellularLocation>
</comment>
<comment type="similarity">
    <text evidence="1">Belongs to the TatB family.</text>
</comment>
<accession>Q5P7A0</accession>
<evidence type="ECO:0000255" key="1">
    <source>
        <dbReference type="HAMAP-Rule" id="MF_00237"/>
    </source>
</evidence>
<evidence type="ECO:0000256" key="2">
    <source>
        <dbReference type="SAM" id="MobiDB-lite"/>
    </source>
</evidence>
<proteinExistence type="inferred from homology"/>
<reference key="1">
    <citation type="journal article" date="2005" name="Arch. Microbiol.">
        <title>The genome sequence of an anaerobic aromatic-degrading denitrifying bacterium, strain EbN1.</title>
        <authorList>
            <person name="Rabus R."/>
            <person name="Kube M."/>
            <person name="Heider J."/>
            <person name="Beck A."/>
            <person name="Heitmann K."/>
            <person name="Widdel F."/>
            <person name="Reinhardt R."/>
        </authorList>
    </citation>
    <scope>NUCLEOTIDE SEQUENCE [LARGE SCALE GENOMIC DNA]</scope>
    <source>
        <strain>DSM 19018 / LMG 30748 / EbN1</strain>
    </source>
</reference>
<dbReference type="EMBL" id="CR555306">
    <property type="protein sequence ID" value="CAI06811.1"/>
    <property type="molecule type" value="Genomic_DNA"/>
</dbReference>
<dbReference type="RefSeq" id="WP_011236539.1">
    <property type="nucleotide sequence ID" value="NC_006513.1"/>
</dbReference>
<dbReference type="SMR" id="Q5P7A0"/>
<dbReference type="STRING" id="76114.ebD2"/>
<dbReference type="KEGG" id="eba:ebD2"/>
<dbReference type="eggNOG" id="COG1826">
    <property type="taxonomic scope" value="Bacteria"/>
</dbReference>
<dbReference type="HOGENOM" id="CLU_086034_1_1_4"/>
<dbReference type="OrthoDB" id="9816005at2"/>
<dbReference type="Proteomes" id="UP000006552">
    <property type="component" value="Chromosome"/>
</dbReference>
<dbReference type="GO" id="GO:0033281">
    <property type="term" value="C:TAT protein transport complex"/>
    <property type="evidence" value="ECO:0007669"/>
    <property type="project" value="UniProtKB-UniRule"/>
</dbReference>
<dbReference type="GO" id="GO:0008320">
    <property type="term" value="F:protein transmembrane transporter activity"/>
    <property type="evidence" value="ECO:0007669"/>
    <property type="project" value="UniProtKB-UniRule"/>
</dbReference>
<dbReference type="GO" id="GO:0043953">
    <property type="term" value="P:protein transport by the Tat complex"/>
    <property type="evidence" value="ECO:0007669"/>
    <property type="project" value="UniProtKB-UniRule"/>
</dbReference>
<dbReference type="Gene3D" id="1.20.5.3310">
    <property type="match status" value="1"/>
</dbReference>
<dbReference type="HAMAP" id="MF_00237">
    <property type="entry name" value="TatB"/>
    <property type="match status" value="1"/>
</dbReference>
<dbReference type="InterPro" id="IPR003369">
    <property type="entry name" value="TatA/B/E"/>
</dbReference>
<dbReference type="InterPro" id="IPR018448">
    <property type="entry name" value="TatB"/>
</dbReference>
<dbReference type="NCBIfam" id="TIGR01410">
    <property type="entry name" value="tatB"/>
    <property type="match status" value="1"/>
</dbReference>
<dbReference type="PANTHER" id="PTHR33162">
    <property type="entry name" value="SEC-INDEPENDENT PROTEIN TRANSLOCASE PROTEIN TATA, CHLOROPLASTIC"/>
    <property type="match status" value="1"/>
</dbReference>
<dbReference type="PANTHER" id="PTHR33162:SF1">
    <property type="entry name" value="SEC-INDEPENDENT PROTEIN TRANSLOCASE PROTEIN TATA, CHLOROPLASTIC"/>
    <property type="match status" value="1"/>
</dbReference>
<dbReference type="Pfam" id="PF02416">
    <property type="entry name" value="TatA_B_E"/>
    <property type="match status" value="1"/>
</dbReference>
<dbReference type="PRINTS" id="PR01506">
    <property type="entry name" value="TATBPROTEIN"/>
</dbReference>
<name>TATB_AROAE</name>